<protein>
    <recommendedName>
        <fullName>Autoinducer 2-binding protein LsrB</fullName>
        <shortName>AI-2-binding protein LsrB</shortName>
    </recommendedName>
</protein>
<proteinExistence type="inferred from homology"/>
<organism>
    <name type="scientific">Yersinia pestis (strain Pestoides F)</name>
    <dbReference type="NCBI Taxonomy" id="386656"/>
    <lineage>
        <taxon>Bacteria</taxon>
        <taxon>Pseudomonadati</taxon>
        <taxon>Pseudomonadota</taxon>
        <taxon>Gammaproteobacteria</taxon>
        <taxon>Enterobacterales</taxon>
        <taxon>Yersiniaceae</taxon>
        <taxon>Yersinia</taxon>
    </lineage>
</organism>
<comment type="function">
    <text evidence="1">Part of the ABC transporter complex LsrABCD involved in autoinducer 2 (AI-2) import. Binds AI-2 and delivers it to the LsrC and LsrD permeases (By similarity).</text>
</comment>
<comment type="subunit">
    <text evidence="1">The complex is composed of two ATP-binding proteins (LsrA), two transmembrane proteins (LsrC and LsrD) and a solute-binding protein (LsrB).</text>
</comment>
<comment type="subcellular location">
    <subcellularLocation>
        <location evidence="3">Periplasm</location>
    </subcellularLocation>
</comment>
<comment type="similarity">
    <text evidence="3">Belongs to the bacterial solute-binding protein 2 family.</text>
</comment>
<keyword id="KW-0574">Periplasm</keyword>
<keyword id="KW-0732">Signal</keyword>
<sequence>MRTQRLKKLALVCALGFACITTAQAAERIAFIPKLVGVGFFTSGGKGAVDAGKALGVDVTYDGPTEPSVSGQVQLINNFVNQGYNAIVVSAVSPDGLCPALKRAMQRGVKILTWDSDTKPECRSVYINQGTPNQLGSMLVDMAANQVKKEQAKVAFFYSSPTVTDQNQWVNEAKKKIQQEHPGWEIVTTQFGYNDATKSLQTAEGILKAYADLDAIIAPDANALPAAAQAAENLKRANVAIVGFSTPNVMRPYVERGTVKEFGLWDVVNQGKISVYVANEMLKKGDLNVGDKIDIPNIGVVEVSPNRVQGYDYEAKGNGIVLLPQRVIFTKENISKYDF</sequence>
<name>LSRB_YERPP</name>
<feature type="signal peptide" evidence="2">
    <location>
        <begin position="1"/>
        <end position="25"/>
    </location>
</feature>
<feature type="chain" id="PRO_5000237032" description="Autoinducer 2-binding protein LsrB">
    <location>
        <begin position="26"/>
        <end position="339"/>
    </location>
</feature>
<reference key="1">
    <citation type="submission" date="2007-02" db="EMBL/GenBank/DDBJ databases">
        <title>Complete sequence of chromosome of Yersinia pestis Pestoides F.</title>
        <authorList>
            <consortium name="US DOE Joint Genome Institute"/>
            <person name="Copeland A."/>
            <person name="Lucas S."/>
            <person name="Lapidus A."/>
            <person name="Barry K."/>
            <person name="Detter J.C."/>
            <person name="Glavina del Rio T."/>
            <person name="Hammon N."/>
            <person name="Israni S."/>
            <person name="Dalin E."/>
            <person name="Tice H."/>
            <person name="Pitluck S."/>
            <person name="Di Bartolo G."/>
            <person name="Chain P."/>
            <person name="Malfatti S."/>
            <person name="Shin M."/>
            <person name="Vergez L."/>
            <person name="Schmutz J."/>
            <person name="Larimer F."/>
            <person name="Land M."/>
            <person name="Hauser L."/>
            <person name="Worsham P."/>
            <person name="Chu M."/>
            <person name="Bearden S."/>
            <person name="Garcia E."/>
            <person name="Richardson P."/>
        </authorList>
    </citation>
    <scope>NUCLEOTIDE SEQUENCE [LARGE SCALE GENOMIC DNA]</scope>
    <source>
        <strain>Pestoides F</strain>
    </source>
</reference>
<dbReference type="EMBL" id="CP000668">
    <property type="protein sequence ID" value="ABP41580.1"/>
    <property type="molecule type" value="Genomic_DNA"/>
</dbReference>
<dbReference type="RefSeq" id="WP_002209189.1">
    <property type="nucleotide sequence ID" value="NZ_CP009715.1"/>
</dbReference>
<dbReference type="SMR" id="A4TQL8"/>
<dbReference type="GeneID" id="57974201"/>
<dbReference type="KEGG" id="ypp:YPDSF_3222"/>
<dbReference type="PATRIC" id="fig|386656.14.peg.1122"/>
<dbReference type="GO" id="GO:0043190">
    <property type="term" value="C:ATP-binding cassette (ABC) transporter complex"/>
    <property type="evidence" value="ECO:0007669"/>
    <property type="project" value="InterPro"/>
</dbReference>
<dbReference type="GO" id="GO:0030288">
    <property type="term" value="C:outer membrane-bounded periplasmic space"/>
    <property type="evidence" value="ECO:0007669"/>
    <property type="project" value="TreeGrafter"/>
</dbReference>
<dbReference type="GO" id="GO:0030246">
    <property type="term" value="F:carbohydrate binding"/>
    <property type="evidence" value="ECO:0007669"/>
    <property type="project" value="TreeGrafter"/>
</dbReference>
<dbReference type="CDD" id="cd20003">
    <property type="entry name" value="PBP1_LsrB_Quorum_Sensing"/>
    <property type="match status" value="1"/>
</dbReference>
<dbReference type="Gene3D" id="3.40.50.2300">
    <property type="match status" value="2"/>
</dbReference>
<dbReference type="InterPro" id="IPR050555">
    <property type="entry name" value="Bact_Solute-Bind_Prot2"/>
</dbReference>
<dbReference type="InterPro" id="IPR030159">
    <property type="entry name" value="LsrB"/>
</dbReference>
<dbReference type="InterPro" id="IPR028082">
    <property type="entry name" value="Peripla_BP_I"/>
</dbReference>
<dbReference type="InterPro" id="IPR025997">
    <property type="entry name" value="SBP_2_dom"/>
</dbReference>
<dbReference type="NCBIfam" id="NF011937">
    <property type="entry name" value="PRK15408.1"/>
    <property type="match status" value="1"/>
</dbReference>
<dbReference type="PANTHER" id="PTHR30036:SF7">
    <property type="entry name" value="ABC TRANSPORTER PERIPLASMIC-BINDING PROTEIN YPHF"/>
    <property type="match status" value="1"/>
</dbReference>
<dbReference type="PANTHER" id="PTHR30036">
    <property type="entry name" value="D-XYLOSE-BINDING PERIPLASMIC PROTEIN"/>
    <property type="match status" value="1"/>
</dbReference>
<dbReference type="Pfam" id="PF13407">
    <property type="entry name" value="Peripla_BP_4"/>
    <property type="match status" value="1"/>
</dbReference>
<dbReference type="SUPFAM" id="SSF53822">
    <property type="entry name" value="Periplasmic binding protein-like I"/>
    <property type="match status" value="1"/>
</dbReference>
<evidence type="ECO:0000250" key="1"/>
<evidence type="ECO:0000255" key="2"/>
<evidence type="ECO:0000305" key="3"/>
<gene>
    <name type="primary">lsrB</name>
    <name type="ordered locus">YPDSF_3222</name>
</gene>
<accession>A4TQL8</accession>